<gene>
    <name evidence="1" type="primary">rlmH</name>
    <name type="ordered locus">MMP1037</name>
</gene>
<evidence type="ECO:0000255" key="1">
    <source>
        <dbReference type="HAMAP-Rule" id="MF_00658"/>
    </source>
</evidence>
<keyword id="KW-0963">Cytoplasm</keyword>
<keyword id="KW-0489">Methyltransferase</keyword>
<keyword id="KW-1185">Reference proteome</keyword>
<keyword id="KW-0698">rRNA processing</keyword>
<keyword id="KW-0949">S-adenosyl-L-methionine</keyword>
<keyword id="KW-0808">Transferase</keyword>
<accession>Q6LYF4</accession>
<protein>
    <recommendedName>
        <fullName evidence="1">Putative ribosomal RNA large subunit methyltransferase H</fullName>
        <ecNumber evidence="1">2.1.1.177</ecNumber>
    </recommendedName>
    <alternativeName>
        <fullName evidence="1">23S rRNA (pseudouridine1915-N3)-methyltransferase</fullName>
    </alternativeName>
    <alternativeName>
        <fullName evidence="1">rRNA (pseudouridine-N3-)-methyltransferase RlmH</fullName>
    </alternativeName>
</protein>
<dbReference type="EC" id="2.1.1.177" evidence="1"/>
<dbReference type="EMBL" id="BX950229">
    <property type="protein sequence ID" value="CAF30593.1"/>
    <property type="molecule type" value="Genomic_DNA"/>
</dbReference>
<dbReference type="RefSeq" id="WP_011170981.1">
    <property type="nucleotide sequence ID" value="NC_005791.1"/>
</dbReference>
<dbReference type="SMR" id="Q6LYF4"/>
<dbReference type="STRING" id="267377.MMP1037"/>
<dbReference type="EnsemblBacteria" id="CAF30593">
    <property type="protein sequence ID" value="CAF30593"/>
    <property type="gene ID" value="MMP1037"/>
</dbReference>
<dbReference type="GeneID" id="2762088"/>
<dbReference type="GeneID" id="36102897"/>
<dbReference type="KEGG" id="mmp:MMP1037"/>
<dbReference type="PATRIC" id="fig|267377.15.peg.1069"/>
<dbReference type="eggNOG" id="arCOG05111">
    <property type="taxonomic scope" value="Archaea"/>
</dbReference>
<dbReference type="HOGENOM" id="CLU_100552_0_0_2"/>
<dbReference type="OrthoDB" id="111266at2157"/>
<dbReference type="Proteomes" id="UP000000590">
    <property type="component" value="Chromosome"/>
</dbReference>
<dbReference type="GO" id="GO:0005737">
    <property type="term" value="C:cytoplasm"/>
    <property type="evidence" value="ECO:0007669"/>
    <property type="project" value="UniProtKB-SubCell"/>
</dbReference>
<dbReference type="GO" id="GO:0070038">
    <property type="term" value="F:rRNA (pseudouridine-N3-)-methyltransferase activity"/>
    <property type="evidence" value="ECO:0007669"/>
    <property type="project" value="UniProtKB-UniRule"/>
</dbReference>
<dbReference type="CDD" id="cd18081">
    <property type="entry name" value="RlmH-like"/>
    <property type="match status" value="1"/>
</dbReference>
<dbReference type="Gene3D" id="3.40.1280.10">
    <property type="match status" value="1"/>
</dbReference>
<dbReference type="HAMAP" id="MF_00658">
    <property type="entry name" value="23SrRNA_methyltr_H"/>
    <property type="match status" value="1"/>
</dbReference>
<dbReference type="InterPro" id="IPR029028">
    <property type="entry name" value="Alpha/beta_knot_MTases"/>
</dbReference>
<dbReference type="InterPro" id="IPR003742">
    <property type="entry name" value="RlmH-like"/>
</dbReference>
<dbReference type="InterPro" id="IPR029026">
    <property type="entry name" value="tRNA_m1G_MTases_N"/>
</dbReference>
<dbReference type="NCBIfam" id="NF000985">
    <property type="entry name" value="PRK00103.1-3"/>
    <property type="match status" value="1"/>
</dbReference>
<dbReference type="NCBIfam" id="TIGR00246">
    <property type="entry name" value="tRNA_RlmH_YbeA"/>
    <property type="match status" value="1"/>
</dbReference>
<dbReference type="PANTHER" id="PTHR33603">
    <property type="entry name" value="METHYLTRANSFERASE"/>
    <property type="match status" value="1"/>
</dbReference>
<dbReference type="PANTHER" id="PTHR33603:SF1">
    <property type="entry name" value="RIBOSOMAL RNA LARGE SUBUNIT METHYLTRANSFERASE H"/>
    <property type="match status" value="1"/>
</dbReference>
<dbReference type="Pfam" id="PF02590">
    <property type="entry name" value="SPOUT_MTase"/>
    <property type="match status" value="1"/>
</dbReference>
<dbReference type="PIRSF" id="PIRSF004505">
    <property type="entry name" value="MT_bac"/>
    <property type="match status" value="1"/>
</dbReference>
<dbReference type="SUPFAM" id="SSF75217">
    <property type="entry name" value="alpha/beta knot"/>
    <property type="match status" value="1"/>
</dbReference>
<reference key="1">
    <citation type="journal article" date="2004" name="J. Bacteriol.">
        <title>Complete genome sequence of the genetically tractable hydrogenotrophic methanogen Methanococcus maripaludis.</title>
        <authorList>
            <person name="Hendrickson E.L."/>
            <person name="Kaul R."/>
            <person name="Zhou Y."/>
            <person name="Bovee D."/>
            <person name="Chapman P."/>
            <person name="Chung J."/>
            <person name="Conway de Macario E."/>
            <person name="Dodsworth J.A."/>
            <person name="Gillett W."/>
            <person name="Graham D.E."/>
            <person name="Hackett M."/>
            <person name="Haydock A.K."/>
            <person name="Kang A."/>
            <person name="Land M.L."/>
            <person name="Levy R."/>
            <person name="Lie T.J."/>
            <person name="Major T.A."/>
            <person name="Moore B.C."/>
            <person name="Porat I."/>
            <person name="Palmeiri A."/>
            <person name="Rouse G."/>
            <person name="Saenphimmachak C."/>
            <person name="Soell D."/>
            <person name="Van Dien S."/>
            <person name="Wang T."/>
            <person name="Whitman W.B."/>
            <person name="Xia Q."/>
            <person name="Zhang Y."/>
            <person name="Larimer F.W."/>
            <person name="Olson M.V."/>
            <person name="Leigh J.A."/>
        </authorList>
    </citation>
    <scope>NUCLEOTIDE SEQUENCE [LARGE SCALE GENOMIC DNA]</scope>
    <source>
        <strain>DSM 14266 / JCM 13030 / NBRC 101832 / S2 / LL</strain>
    </source>
</reference>
<proteinExistence type="inferred from homology"/>
<feature type="chain" id="PRO_0000198220" description="Putative ribosomal RNA large subunit methyltransferase H">
    <location>
        <begin position="1"/>
        <end position="159"/>
    </location>
</feature>
<feature type="binding site" evidence="1">
    <location>
        <position position="76"/>
    </location>
    <ligand>
        <name>S-adenosyl-L-methionine</name>
        <dbReference type="ChEBI" id="CHEBI:59789"/>
    </ligand>
</feature>
<feature type="binding site" evidence="1">
    <location>
        <position position="108"/>
    </location>
    <ligand>
        <name>S-adenosyl-L-methionine</name>
        <dbReference type="ChEBI" id="CHEBI:59789"/>
    </ligand>
</feature>
<feature type="binding site" evidence="1">
    <location>
        <begin position="127"/>
        <end position="132"/>
    </location>
    <ligand>
        <name>S-adenosyl-L-methionine</name>
        <dbReference type="ChEBI" id="CHEBI:59789"/>
    </ligand>
</feature>
<comment type="function">
    <text evidence="1">Specifically methylates the pseudouridine at position 1915 (m3Psi1915) in 23S rRNA.</text>
</comment>
<comment type="catalytic activity">
    <reaction evidence="1">
        <text>pseudouridine(1915) in 23S rRNA + S-adenosyl-L-methionine = N(3)-methylpseudouridine(1915) in 23S rRNA + S-adenosyl-L-homocysteine + H(+)</text>
        <dbReference type="Rhea" id="RHEA:42752"/>
        <dbReference type="Rhea" id="RHEA-COMP:10221"/>
        <dbReference type="Rhea" id="RHEA-COMP:10222"/>
        <dbReference type="ChEBI" id="CHEBI:15378"/>
        <dbReference type="ChEBI" id="CHEBI:57856"/>
        <dbReference type="ChEBI" id="CHEBI:59789"/>
        <dbReference type="ChEBI" id="CHEBI:65314"/>
        <dbReference type="ChEBI" id="CHEBI:74486"/>
        <dbReference type="EC" id="2.1.1.177"/>
    </reaction>
</comment>
<comment type="subcellular location">
    <subcellularLocation>
        <location evidence="1">Cytoplasm</location>
    </subcellularLocation>
</comment>
<comment type="similarity">
    <text evidence="1">Belongs to the RNA methyltransferase RlmH family.</text>
</comment>
<organism>
    <name type="scientific">Methanococcus maripaludis (strain DSM 14266 / JCM 13030 / NBRC 101832 / S2 / LL)</name>
    <dbReference type="NCBI Taxonomy" id="267377"/>
    <lineage>
        <taxon>Archaea</taxon>
        <taxon>Methanobacteriati</taxon>
        <taxon>Methanobacteriota</taxon>
        <taxon>Methanomada group</taxon>
        <taxon>Methanococci</taxon>
        <taxon>Methanococcales</taxon>
        <taxon>Methanococcaceae</taxon>
        <taxon>Methanococcus</taxon>
    </lineage>
</organism>
<sequence>MNVTIISVGKIKEKYLSDAIIEYSKRISRYSKLDIIEVADEKTPENPSDVEKSKILEKEAERILKYLKKDSFLITLEILGKELTSEDLAKKINDLSISGKSDITFVIGGSLGLSKNISEISDFKLSFSKMTFPHQLMRVILLEQIYRSFRIISGEPYHK</sequence>
<name>RLMH_METMP</name>